<comment type="similarity">
    <text evidence="1">Belongs to the bacterial ribosomal protein bL34 family.</text>
</comment>
<accession>Q9KVY1</accession>
<proteinExistence type="inferred from homology"/>
<keyword id="KW-1185">Reference proteome</keyword>
<keyword id="KW-0687">Ribonucleoprotein</keyword>
<keyword id="KW-0689">Ribosomal protein</keyword>
<sequence>MSKRTFQPSVLKRKRTHGFRARMATANGRKVLNARRAKGRKRLSK</sequence>
<reference key="1">
    <citation type="journal article" date="2000" name="Nature">
        <title>DNA sequence of both chromosomes of the cholera pathogen Vibrio cholerae.</title>
        <authorList>
            <person name="Heidelberg J.F."/>
            <person name="Eisen J.A."/>
            <person name="Nelson W.C."/>
            <person name="Clayton R.A."/>
            <person name="Gwinn M.L."/>
            <person name="Dodson R.J."/>
            <person name="Haft D.H."/>
            <person name="Hickey E.K."/>
            <person name="Peterson J.D."/>
            <person name="Umayam L.A."/>
            <person name="Gill S.R."/>
            <person name="Nelson K.E."/>
            <person name="Read T.D."/>
            <person name="Tettelin H."/>
            <person name="Richardson D.L."/>
            <person name="Ermolaeva M.D."/>
            <person name="Vamathevan J.J."/>
            <person name="Bass S."/>
            <person name="Qin H."/>
            <person name="Dragoi I."/>
            <person name="Sellers P."/>
            <person name="McDonald L.A."/>
            <person name="Utterback T.R."/>
            <person name="Fleischmann R.D."/>
            <person name="Nierman W.C."/>
            <person name="White O."/>
            <person name="Salzberg S.L."/>
            <person name="Smith H.O."/>
            <person name="Colwell R.R."/>
            <person name="Mekalanos J.J."/>
            <person name="Venter J.C."/>
            <person name="Fraser C.M."/>
        </authorList>
    </citation>
    <scope>NUCLEOTIDE SEQUENCE [LARGE SCALE GENOMIC DNA]</scope>
    <source>
        <strain>ATCC 39315 / El Tor Inaba N16961</strain>
    </source>
</reference>
<organism>
    <name type="scientific">Vibrio cholerae serotype O1 (strain ATCC 39315 / El Tor Inaba N16961)</name>
    <dbReference type="NCBI Taxonomy" id="243277"/>
    <lineage>
        <taxon>Bacteria</taxon>
        <taxon>Pseudomonadati</taxon>
        <taxon>Pseudomonadota</taxon>
        <taxon>Gammaproteobacteria</taxon>
        <taxon>Vibrionales</taxon>
        <taxon>Vibrionaceae</taxon>
        <taxon>Vibrio</taxon>
    </lineage>
</organism>
<gene>
    <name type="primary">rpmH</name>
    <name type="ordered locus">VC_0007</name>
</gene>
<evidence type="ECO:0000305" key="1"/>
<name>RL34_VIBCH</name>
<protein>
    <recommendedName>
        <fullName evidence="1">Large ribosomal subunit protein bL34</fullName>
    </recommendedName>
    <alternativeName>
        <fullName>50S ribosomal protein L34</fullName>
    </alternativeName>
</protein>
<dbReference type="EMBL" id="AE003852">
    <property type="protein sequence ID" value="AAF93185.1"/>
    <property type="molecule type" value="Genomic_DNA"/>
</dbReference>
<dbReference type="PIR" id="H82375">
    <property type="entry name" value="H82375"/>
</dbReference>
<dbReference type="RefSeq" id="NP_062591.1">
    <property type="nucleotide sequence ID" value="NC_002505.1"/>
</dbReference>
<dbReference type="RefSeq" id="WP_000044781.1">
    <property type="nucleotide sequence ID" value="NZ_LT906614.1"/>
</dbReference>
<dbReference type="SMR" id="Q9KVY1"/>
<dbReference type="STRING" id="243277.VC_0007"/>
<dbReference type="DNASU" id="2614454"/>
<dbReference type="EnsemblBacteria" id="AAF93185">
    <property type="protein sequence ID" value="AAF93185"/>
    <property type="gene ID" value="VC_0007"/>
</dbReference>
<dbReference type="GeneID" id="94015086"/>
<dbReference type="KEGG" id="vch:VC_0007"/>
<dbReference type="PATRIC" id="fig|243277.26.peg.6"/>
<dbReference type="eggNOG" id="COG0230">
    <property type="taxonomic scope" value="Bacteria"/>
</dbReference>
<dbReference type="HOGENOM" id="CLU_129938_2_0_6"/>
<dbReference type="Proteomes" id="UP000000584">
    <property type="component" value="Chromosome 1"/>
</dbReference>
<dbReference type="GO" id="GO:1990904">
    <property type="term" value="C:ribonucleoprotein complex"/>
    <property type="evidence" value="ECO:0007669"/>
    <property type="project" value="UniProtKB-KW"/>
</dbReference>
<dbReference type="GO" id="GO:0005840">
    <property type="term" value="C:ribosome"/>
    <property type="evidence" value="ECO:0007669"/>
    <property type="project" value="UniProtKB-KW"/>
</dbReference>
<dbReference type="GO" id="GO:0003735">
    <property type="term" value="F:structural constituent of ribosome"/>
    <property type="evidence" value="ECO:0007669"/>
    <property type="project" value="InterPro"/>
</dbReference>
<dbReference type="GO" id="GO:0006412">
    <property type="term" value="P:translation"/>
    <property type="evidence" value="ECO:0007669"/>
    <property type="project" value="UniProtKB-UniRule"/>
</dbReference>
<dbReference type="FunFam" id="1.10.287.3980:FF:000001">
    <property type="entry name" value="Mitochondrial ribosomal protein L34"/>
    <property type="match status" value="1"/>
</dbReference>
<dbReference type="Gene3D" id="1.10.287.3980">
    <property type="match status" value="1"/>
</dbReference>
<dbReference type="HAMAP" id="MF_00391">
    <property type="entry name" value="Ribosomal_bL34"/>
    <property type="match status" value="1"/>
</dbReference>
<dbReference type="InterPro" id="IPR000271">
    <property type="entry name" value="Ribosomal_bL34"/>
</dbReference>
<dbReference type="InterPro" id="IPR020939">
    <property type="entry name" value="Ribosomal_bL34_CS"/>
</dbReference>
<dbReference type="NCBIfam" id="TIGR01030">
    <property type="entry name" value="rpmH_bact"/>
    <property type="match status" value="1"/>
</dbReference>
<dbReference type="PANTHER" id="PTHR14503:SF4">
    <property type="entry name" value="LARGE RIBOSOMAL SUBUNIT PROTEIN BL34M"/>
    <property type="match status" value="1"/>
</dbReference>
<dbReference type="PANTHER" id="PTHR14503">
    <property type="entry name" value="MITOCHONDRIAL RIBOSOMAL PROTEIN 34 FAMILY MEMBER"/>
    <property type="match status" value="1"/>
</dbReference>
<dbReference type="Pfam" id="PF00468">
    <property type="entry name" value="Ribosomal_L34"/>
    <property type="match status" value="1"/>
</dbReference>
<dbReference type="PROSITE" id="PS00784">
    <property type="entry name" value="RIBOSOMAL_L34"/>
    <property type="match status" value="1"/>
</dbReference>
<feature type="chain" id="PRO_0000187499" description="Large ribosomal subunit protein bL34">
    <location>
        <begin position="1"/>
        <end position="45"/>
    </location>
</feature>